<comment type="function">
    <text evidence="1">Assembly factor required for Rieske Fe-S protein RIP1 incorporation into the cytochrome b-c1 (CIII) complex. Functions as a chaperone, binding to this subunit within the mitochondrial matrix and stabilizing it prior to its translocation and insertion into the late CIII dimeric intermediate within the mitochondrial inner membrane. Modulates the mitochondrial matrix zinc pool (By similarity).</text>
</comment>
<comment type="subunit">
    <text evidence="1">Interacts with RIP1.</text>
</comment>
<comment type="subcellular location">
    <subcellularLocation>
        <location evidence="1">Mitochondrion matrix</location>
    </subcellularLocation>
</comment>
<comment type="similarity">
    <text evidence="3">Belongs to the complex I LYR family. MZM1 subfamily.</text>
</comment>
<reference key="1">
    <citation type="journal article" date="2005" name="Nature">
        <title>Sequencing of Aspergillus nidulans and comparative analysis with A. fumigatus and A. oryzae.</title>
        <authorList>
            <person name="Galagan J.E."/>
            <person name="Calvo S.E."/>
            <person name="Cuomo C."/>
            <person name="Ma L.-J."/>
            <person name="Wortman J.R."/>
            <person name="Batzoglou S."/>
            <person name="Lee S.-I."/>
            <person name="Bastuerkmen M."/>
            <person name="Spevak C.C."/>
            <person name="Clutterbuck J."/>
            <person name="Kapitonov V."/>
            <person name="Jurka J."/>
            <person name="Scazzocchio C."/>
            <person name="Farman M.L."/>
            <person name="Butler J."/>
            <person name="Purcell S."/>
            <person name="Harris S."/>
            <person name="Braus G.H."/>
            <person name="Draht O."/>
            <person name="Busch S."/>
            <person name="D'Enfert C."/>
            <person name="Bouchier C."/>
            <person name="Goldman G.H."/>
            <person name="Bell-Pedersen D."/>
            <person name="Griffiths-Jones S."/>
            <person name="Doonan J.H."/>
            <person name="Yu J."/>
            <person name="Vienken K."/>
            <person name="Pain A."/>
            <person name="Freitag M."/>
            <person name="Selker E.U."/>
            <person name="Archer D.B."/>
            <person name="Penalva M.A."/>
            <person name="Oakley B.R."/>
            <person name="Momany M."/>
            <person name="Tanaka T."/>
            <person name="Kumagai T."/>
            <person name="Asai K."/>
            <person name="Machida M."/>
            <person name="Nierman W.C."/>
            <person name="Denning D.W."/>
            <person name="Caddick M.X."/>
            <person name="Hynes M."/>
            <person name="Paoletti M."/>
            <person name="Fischer R."/>
            <person name="Miller B.L."/>
            <person name="Dyer P.S."/>
            <person name="Sachs M.S."/>
            <person name="Osmani S.A."/>
            <person name="Birren B.W."/>
        </authorList>
    </citation>
    <scope>NUCLEOTIDE SEQUENCE [LARGE SCALE GENOMIC DNA]</scope>
    <source>
        <strain>FGSC A4 / ATCC 38163 / CBS 112.46 / NRRL 194 / M139</strain>
    </source>
</reference>
<reference key="2">
    <citation type="journal article" date="2009" name="Fungal Genet. Biol.">
        <title>The 2008 update of the Aspergillus nidulans genome annotation: a community effort.</title>
        <authorList>
            <person name="Wortman J.R."/>
            <person name="Gilsenan J.M."/>
            <person name="Joardar V."/>
            <person name="Deegan J."/>
            <person name="Clutterbuck J."/>
            <person name="Andersen M.R."/>
            <person name="Archer D."/>
            <person name="Bencina M."/>
            <person name="Braus G."/>
            <person name="Coutinho P."/>
            <person name="von Dohren H."/>
            <person name="Doonan J."/>
            <person name="Driessen A.J."/>
            <person name="Durek P."/>
            <person name="Espeso E."/>
            <person name="Fekete E."/>
            <person name="Flipphi M."/>
            <person name="Estrada C.G."/>
            <person name="Geysens S."/>
            <person name="Goldman G."/>
            <person name="de Groot P.W."/>
            <person name="Hansen K."/>
            <person name="Harris S.D."/>
            <person name="Heinekamp T."/>
            <person name="Helmstaedt K."/>
            <person name="Henrissat B."/>
            <person name="Hofmann G."/>
            <person name="Homan T."/>
            <person name="Horio T."/>
            <person name="Horiuchi H."/>
            <person name="James S."/>
            <person name="Jones M."/>
            <person name="Karaffa L."/>
            <person name="Karanyi Z."/>
            <person name="Kato M."/>
            <person name="Keller N."/>
            <person name="Kelly D.E."/>
            <person name="Kiel J.A."/>
            <person name="Kim J.M."/>
            <person name="van der Klei I.J."/>
            <person name="Klis F.M."/>
            <person name="Kovalchuk A."/>
            <person name="Krasevec N."/>
            <person name="Kubicek C.P."/>
            <person name="Liu B."/>
            <person name="Maccabe A."/>
            <person name="Meyer V."/>
            <person name="Mirabito P."/>
            <person name="Miskei M."/>
            <person name="Mos M."/>
            <person name="Mullins J."/>
            <person name="Nelson D.R."/>
            <person name="Nielsen J."/>
            <person name="Oakley B.R."/>
            <person name="Osmani S.A."/>
            <person name="Pakula T."/>
            <person name="Paszewski A."/>
            <person name="Paulsen I."/>
            <person name="Pilsyk S."/>
            <person name="Pocsi I."/>
            <person name="Punt P.J."/>
            <person name="Ram A.F."/>
            <person name="Ren Q."/>
            <person name="Robellet X."/>
            <person name="Robson G."/>
            <person name="Seiboth B."/>
            <person name="van Solingen P."/>
            <person name="Specht T."/>
            <person name="Sun J."/>
            <person name="Taheri-Talesh N."/>
            <person name="Takeshita N."/>
            <person name="Ussery D."/>
            <person name="vanKuyk P.A."/>
            <person name="Visser H."/>
            <person name="van de Vondervoort P.J."/>
            <person name="de Vries R.P."/>
            <person name="Walton J."/>
            <person name="Xiang X."/>
            <person name="Xiong Y."/>
            <person name="Zeng A.P."/>
            <person name="Brandt B.W."/>
            <person name="Cornell M.J."/>
            <person name="van den Hondel C.A."/>
            <person name="Visser J."/>
            <person name="Oliver S.G."/>
            <person name="Turner G."/>
        </authorList>
    </citation>
    <scope>GENOME REANNOTATION</scope>
    <source>
        <strain>FGSC A4 / ATCC 38163 / CBS 112.46 / NRRL 194 / M139</strain>
    </source>
</reference>
<keyword id="KW-0143">Chaperone</keyword>
<keyword id="KW-0496">Mitochondrion</keyword>
<keyword id="KW-1185">Reference proteome</keyword>
<keyword id="KW-0809">Transit peptide</keyword>
<protein>
    <recommendedName>
        <fullName>Mitochondrial zinc maintenance protein 1, mitochondrial</fullName>
    </recommendedName>
</protein>
<name>MZM1_EMENI</name>
<accession>Q5AX36</accession>
<accession>C8VD81</accession>
<feature type="transit peptide" description="Mitochondrion" evidence="2">
    <location>
        <begin position="1"/>
        <end status="unknown"/>
    </location>
</feature>
<feature type="chain" id="PRO_0000405494" description="Mitochondrial zinc maintenance protein 1, mitochondrial">
    <location>
        <begin status="unknown"/>
        <end position="115"/>
    </location>
</feature>
<gene>
    <name type="primary">MZM1</name>
    <name type="ORF">AN7144</name>
</gene>
<evidence type="ECO:0000250" key="1"/>
<evidence type="ECO:0000255" key="2"/>
<evidence type="ECO:0000305" key="3"/>
<sequence>MASQPAVSALSAYRQVLRATRIAFQNDTRVLLAARQEARQNFEKHRRYGVDTPMQINHALEVASILRHNIVQGARDAEDENAKWELRIHDEIERGDNDSIKVAGKKVKVDKPCSS</sequence>
<proteinExistence type="inferred from homology"/>
<organism>
    <name type="scientific">Emericella nidulans (strain FGSC A4 / ATCC 38163 / CBS 112.46 / NRRL 194 / M139)</name>
    <name type="common">Aspergillus nidulans</name>
    <dbReference type="NCBI Taxonomy" id="227321"/>
    <lineage>
        <taxon>Eukaryota</taxon>
        <taxon>Fungi</taxon>
        <taxon>Dikarya</taxon>
        <taxon>Ascomycota</taxon>
        <taxon>Pezizomycotina</taxon>
        <taxon>Eurotiomycetes</taxon>
        <taxon>Eurotiomycetidae</taxon>
        <taxon>Eurotiales</taxon>
        <taxon>Aspergillaceae</taxon>
        <taxon>Aspergillus</taxon>
        <taxon>Aspergillus subgen. Nidulantes</taxon>
    </lineage>
</organism>
<dbReference type="EMBL" id="AACD01000122">
    <property type="protein sequence ID" value="EAA61396.1"/>
    <property type="molecule type" value="Genomic_DNA"/>
</dbReference>
<dbReference type="EMBL" id="BN001304">
    <property type="protein sequence ID" value="CBF78986.1"/>
    <property type="molecule type" value="Genomic_DNA"/>
</dbReference>
<dbReference type="RefSeq" id="XP_664748.1">
    <property type="nucleotide sequence ID" value="XM_659656.1"/>
</dbReference>
<dbReference type="SMR" id="Q5AX36"/>
<dbReference type="FunCoup" id="Q5AX36">
    <property type="interactions" value="15"/>
</dbReference>
<dbReference type="STRING" id="227321.Q5AX36"/>
<dbReference type="EnsemblFungi" id="CBF78986">
    <property type="protein sequence ID" value="CBF78986"/>
    <property type="gene ID" value="ANIA_07144"/>
</dbReference>
<dbReference type="KEGG" id="ani:ANIA_07144"/>
<dbReference type="VEuPathDB" id="FungiDB:AN7144"/>
<dbReference type="eggNOG" id="ENOG502S6EF">
    <property type="taxonomic scope" value="Eukaryota"/>
</dbReference>
<dbReference type="HOGENOM" id="CLU_147114_2_0_1"/>
<dbReference type="InParanoid" id="Q5AX36"/>
<dbReference type="OMA" id="KYKLRIH"/>
<dbReference type="OrthoDB" id="529194at2759"/>
<dbReference type="Proteomes" id="UP000000560">
    <property type="component" value="Chromosome IV"/>
</dbReference>
<dbReference type="GO" id="GO:0005759">
    <property type="term" value="C:mitochondrial matrix"/>
    <property type="evidence" value="ECO:0000318"/>
    <property type="project" value="GO_Central"/>
</dbReference>
<dbReference type="GO" id="GO:0044183">
    <property type="term" value="F:protein folding chaperone"/>
    <property type="evidence" value="ECO:0000318"/>
    <property type="project" value="GO_Central"/>
</dbReference>
<dbReference type="GO" id="GO:0034551">
    <property type="term" value="P:mitochondrial respiratory chain complex III assembly"/>
    <property type="evidence" value="ECO:0000318"/>
    <property type="project" value="GO_Central"/>
</dbReference>
<dbReference type="CDD" id="cd20267">
    <property type="entry name" value="Complex1_LYR_LYRM7"/>
    <property type="match status" value="1"/>
</dbReference>
<dbReference type="InterPro" id="IPR008011">
    <property type="entry name" value="Complex1_LYR_dom"/>
</dbReference>
<dbReference type="InterPro" id="IPR045298">
    <property type="entry name" value="Complex1_LYR_LYRM7"/>
</dbReference>
<dbReference type="InterPro" id="IPR050435">
    <property type="entry name" value="MZM1/LYRM7"/>
</dbReference>
<dbReference type="PANTHER" id="PTHR46749">
    <property type="entry name" value="COMPLEX III ASSEMBLY FACTOR LYRM7"/>
    <property type="match status" value="1"/>
</dbReference>
<dbReference type="PANTHER" id="PTHR46749:SF1">
    <property type="entry name" value="COMPLEX III ASSEMBLY FACTOR LYRM7"/>
    <property type="match status" value="1"/>
</dbReference>
<dbReference type="Pfam" id="PF05347">
    <property type="entry name" value="Complex1_LYR"/>
    <property type="match status" value="1"/>
</dbReference>